<protein>
    <recommendedName>
        <fullName evidence="5 7">U4-myrmicitoxin-Tb1a</fullName>
        <shortName evidence="5 7">U4-MYRTX-Tb1a</shortName>
    </recommendedName>
    <alternativeName>
        <fullName evidence="8">U-myrmicitoxin(01)-Tb3a</fullName>
        <shortName evidence="6">MYRTX(01)-Tb3</shortName>
        <shortName evidence="8">U-MYRTX(01)-Tb3a</shortName>
    </alternativeName>
</protein>
<keyword id="KW-0027">Amidation</keyword>
<keyword id="KW-1015">Disulfide bond</keyword>
<keyword id="KW-0964">Secreted</keyword>
<keyword id="KW-0732">Signal</keyword>
<keyword id="KW-0800">Toxin</keyword>
<reference key="1">
    <citation type="journal article" date="2013" name="Toxicon">
        <title>Profiling the venom gland transcriptome of Tetramorium bicarinatum (Hymenoptera: Formicidae): the first transcriptome analysis of an ant species.</title>
        <authorList>
            <person name="Bouzid W."/>
            <person name="Klopp C."/>
            <person name="Verdenaud M."/>
            <person name="Ducancel F."/>
            <person name="Vetillard A."/>
        </authorList>
    </citation>
    <scope>NUCLEOTIDE SEQUENCE [MRNA]</scope>
    <source>
        <tissue>Venom gland</tissue>
    </source>
</reference>
<reference evidence="11" key="2">
    <citation type="journal article" date="2018" name="J. Proteome Res.">
        <title>Deciphering the Molecular Diversity of an Ant Venom Peptidome through a Venomics Approach.</title>
        <authorList>
            <person name="Touchard A."/>
            <person name="Tene N."/>
            <person name="Song P.C.T."/>
            <person name="Lefranc B."/>
            <person name="Leprince J."/>
            <person name="Treilhou M."/>
            <person name="Bonnafe E."/>
        </authorList>
    </citation>
    <scope>NUCLEOTIDE SEQUENCE [MRNA]</scope>
    <scope>MASS SPECTROMETRY</scope>
    <scope>AMIDATION AT GLY-53</scope>
    <scope>SUBCELLULAR LOCATION</scope>
    <source>
        <tissue>Venom</tissue>
        <tissue>Venom gland</tissue>
    </source>
</reference>
<reference key="3">
    <citation type="journal article" date="2018" name="Sci. Adv.">
        <title>A comprehensive portrait of the venom of the giant red bull ant, Myrmecia gulosa, reveals a hyperdiverse hymenopteran toxin gene family.</title>
        <authorList>
            <person name="Robinson S.D."/>
            <person name="Mueller A."/>
            <person name="Clayton D."/>
            <person name="Starobova H."/>
            <person name="Hamilton B.R."/>
            <person name="Payne R.J."/>
            <person name="Vetter I."/>
            <person name="King G.F."/>
            <person name="Undheim E.A.B."/>
        </authorList>
    </citation>
    <scope>NOMENCLATURE</scope>
</reference>
<reference key="4">
    <citation type="journal article" date="2023" name="Toxins">
        <title>Discovery of an insect neuroactive helix ring peptide from ant venom.</title>
        <authorList>
            <person name="Barasse V."/>
            <person name="Jouvensal L."/>
            <person name="Boy G."/>
            <person name="Billet A."/>
            <person name="Ascoet S."/>
            <person name="Lefranc B."/>
            <person name="Leprince J."/>
            <person name="Dejean A."/>
            <person name="Lacotte V."/>
            <person name="Rahioui I."/>
            <person name="Sivignon C."/>
            <person name="Gaget K."/>
            <person name="Ribeiro Lopes M."/>
            <person name="Calevro F."/>
            <person name="Da Silva P."/>
            <person name="Loth K."/>
            <person name="Paquet F."/>
            <person name="Treilhou M."/>
            <person name="Bonnafe E."/>
            <person name="Touchard A."/>
        </authorList>
    </citation>
    <scope>SYNTHESIS OF 41-53</scope>
</reference>
<dbReference type="EMBL" id="JZ168553">
    <property type="status" value="NOT_ANNOTATED_CDS"/>
    <property type="molecule type" value="mRNA"/>
</dbReference>
<dbReference type="EMBL" id="MN397940">
    <property type="protein sequence ID" value="QJP03487.1"/>
    <property type="molecule type" value="mRNA"/>
</dbReference>
<dbReference type="GO" id="GO:0005576">
    <property type="term" value="C:extracellular region"/>
    <property type="evidence" value="ECO:0007669"/>
    <property type="project" value="UniProtKB-SubCell"/>
</dbReference>
<dbReference type="GO" id="GO:0090729">
    <property type="term" value="F:toxin activity"/>
    <property type="evidence" value="ECO:0007669"/>
    <property type="project" value="UniProtKB-KW"/>
</dbReference>
<dbReference type="InterPro" id="IPR049518">
    <property type="entry name" value="Pilosulin"/>
</dbReference>
<dbReference type="Pfam" id="PF17499">
    <property type="entry name" value="Pilosulin"/>
    <property type="match status" value="1"/>
</dbReference>
<organism>
    <name type="scientific">Tetramorium bicarinatum</name>
    <name type="common">Tramp ant</name>
    <dbReference type="NCBI Taxonomy" id="219812"/>
    <lineage>
        <taxon>Eukaryota</taxon>
        <taxon>Metazoa</taxon>
        <taxon>Ecdysozoa</taxon>
        <taxon>Arthropoda</taxon>
        <taxon>Hexapoda</taxon>
        <taxon>Insecta</taxon>
        <taxon>Pterygota</taxon>
        <taxon>Neoptera</taxon>
        <taxon>Endopterygota</taxon>
        <taxon>Hymenoptera</taxon>
        <taxon>Apocrita</taxon>
        <taxon>Aculeata</taxon>
        <taxon>Formicoidea</taxon>
        <taxon>Formicidae</taxon>
        <taxon>Myrmicinae</taxon>
        <taxon>Tetramorium</taxon>
    </lineage>
</organism>
<accession>P0DSI4</accession>
<accession>A0A6M3Z4K1</accession>
<evidence type="ECO:0000250" key="1">
    <source>
        <dbReference type="UniProtKB" id="W8GNV3"/>
    </source>
</evidence>
<evidence type="ECO:0000255" key="2"/>
<evidence type="ECO:0000269" key="3">
    <source>
    </source>
</evidence>
<evidence type="ECO:0000269" key="4">
    <source>
    </source>
</evidence>
<evidence type="ECO:0000303" key="5">
    <source>
    </source>
</evidence>
<evidence type="ECO:0000303" key="6">
    <source>
    </source>
</evidence>
<evidence type="ECO:0000303" key="7">
    <source>
    </source>
</evidence>
<evidence type="ECO:0000305" key="8"/>
<evidence type="ECO:0000305" key="9">
    <source>
    </source>
</evidence>
<evidence type="ECO:0000305" key="10">
    <source>
    </source>
</evidence>
<evidence type="ECO:0000312" key="11">
    <source>
        <dbReference type="EMBL" id="QJP03487.1"/>
    </source>
</evidence>
<comment type="function">
    <text evidence="4">Venom protein with unknown function. Does not induce paralysis when a high dose is administered by intrathoracic injection into the blowfly Lucilia caesar.</text>
</comment>
<comment type="subcellular location">
    <subcellularLocation>
        <location evidence="3">Secreted</location>
    </subcellularLocation>
</comment>
<comment type="tissue specificity">
    <text evidence="9">Expressed by the venom gland.</text>
</comment>
<comment type="PTM">
    <text evidence="8">Contains 1 disulfide bond.</text>
</comment>
<comment type="mass spectrometry" mass="1523.72" method="Electrospray" evidence="3"/>
<comment type="similarity">
    <text evidence="8">Belongs to the formicidae venom precursor-01 superfamily.</text>
</comment>
<sequence length="56" mass="6052">MQPSYLLLTFAIIFVMVIMYSPAVEAKAGADADADAHADAGCSQFRRMRNLCGGKK</sequence>
<name>TX4A_TETBN</name>
<feature type="signal peptide" evidence="2">
    <location>
        <begin position="1"/>
        <end position="26"/>
    </location>
</feature>
<feature type="propeptide" id="PRO_0000447051" evidence="10">
    <location>
        <begin position="27"/>
        <end position="40"/>
    </location>
</feature>
<feature type="peptide" id="PRO_0000447052" description="U4-myrmicitoxin-Tb1a">
    <location>
        <begin position="41"/>
        <end position="53"/>
    </location>
</feature>
<feature type="modified residue" description="Glycine amide" evidence="1">
    <location>
        <position position="53"/>
    </location>
</feature>
<feature type="sequence conflict" description="In Ref. 2; QJP03487." evidence="8" ref="2">
    <original>T</original>
    <variation>A</variation>
    <location>
        <position position="9"/>
    </location>
</feature>
<proteinExistence type="evidence at protein level"/>